<protein>
    <recommendedName>
        <fullName evidence="1">3-dehydroquinate synthase</fullName>
        <shortName evidence="1">DHQS</shortName>
        <ecNumber evidence="1">4.2.3.4</ecNumber>
    </recommendedName>
</protein>
<name>AROB_LEGPL</name>
<proteinExistence type="inferred from homology"/>
<sequence length="369" mass="40844">MAKFELYAEVDVSISGHQYPVIICRNGLIDPELINRFITSKQVLIVTNRTVAPLYLGHLQSVLPSKQCDVVILEDGEEHKNQRSLSTIYDSLIQNKHHRDTSIIALGGGVIGDMAGFAASTYQRGVRFIQLPTTLLAQVDASVGGKTAINHPAGKNMIGSFYQPQAVIIDLNTLKTLPEREFRAGIAEMIKYALLVGGSFFERIQAVLQQGLTVHSPELPLLIAECCQVKAKIVEQDERESGVRALLNLGHTFAHALETYTDYKKWLHGEAVAIGLYCAAVLSEKKGLLDKPIVDQVEKMLIHAGLPHKIPNSIDLIQLRELMSLDKKIKNNCLRFVMIKKPGACYIDDSVTEDCLHNTLINVVEGEQK</sequence>
<accession>Q5WXX5</accession>
<comment type="function">
    <text evidence="1">Catalyzes the conversion of 3-deoxy-D-arabino-heptulosonate 7-phosphate (DAHP) to dehydroquinate (DHQ).</text>
</comment>
<comment type="catalytic activity">
    <reaction evidence="1">
        <text>7-phospho-2-dehydro-3-deoxy-D-arabino-heptonate = 3-dehydroquinate + phosphate</text>
        <dbReference type="Rhea" id="RHEA:21968"/>
        <dbReference type="ChEBI" id="CHEBI:32364"/>
        <dbReference type="ChEBI" id="CHEBI:43474"/>
        <dbReference type="ChEBI" id="CHEBI:58394"/>
        <dbReference type="EC" id="4.2.3.4"/>
    </reaction>
</comment>
<comment type="cofactor">
    <cofactor evidence="1">
        <name>Co(2+)</name>
        <dbReference type="ChEBI" id="CHEBI:48828"/>
    </cofactor>
    <cofactor evidence="1">
        <name>Zn(2+)</name>
        <dbReference type="ChEBI" id="CHEBI:29105"/>
    </cofactor>
    <text evidence="1">Binds 1 divalent metal cation per subunit. Can use either Co(2+) or Zn(2+).</text>
</comment>
<comment type="cofactor">
    <cofactor evidence="1">
        <name>NAD(+)</name>
        <dbReference type="ChEBI" id="CHEBI:57540"/>
    </cofactor>
</comment>
<comment type="pathway">
    <text evidence="1">Metabolic intermediate biosynthesis; chorismate biosynthesis; chorismate from D-erythrose 4-phosphate and phosphoenolpyruvate: step 2/7.</text>
</comment>
<comment type="subcellular location">
    <subcellularLocation>
        <location evidence="1">Cytoplasm</location>
    </subcellularLocation>
</comment>
<comment type="similarity">
    <text evidence="1">Belongs to the sugar phosphate cyclases superfamily. Dehydroquinate synthase family.</text>
</comment>
<evidence type="ECO:0000255" key="1">
    <source>
        <dbReference type="HAMAP-Rule" id="MF_00110"/>
    </source>
</evidence>
<dbReference type="EC" id="4.2.3.4" evidence="1"/>
<dbReference type="EMBL" id="CR628337">
    <property type="protein sequence ID" value="CAH15198.1"/>
    <property type="molecule type" value="Genomic_DNA"/>
</dbReference>
<dbReference type="RefSeq" id="WP_011215099.1">
    <property type="nucleotide sequence ID" value="NC_006369.1"/>
</dbReference>
<dbReference type="SMR" id="Q5WXX5"/>
<dbReference type="KEGG" id="lpf:lpl0964"/>
<dbReference type="LegioList" id="lpl0964"/>
<dbReference type="HOGENOM" id="CLU_001201_0_2_6"/>
<dbReference type="UniPathway" id="UPA00053">
    <property type="reaction ID" value="UER00085"/>
</dbReference>
<dbReference type="Proteomes" id="UP000002517">
    <property type="component" value="Chromosome"/>
</dbReference>
<dbReference type="GO" id="GO:0005737">
    <property type="term" value="C:cytoplasm"/>
    <property type="evidence" value="ECO:0007669"/>
    <property type="project" value="UniProtKB-SubCell"/>
</dbReference>
<dbReference type="GO" id="GO:0003856">
    <property type="term" value="F:3-dehydroquinate synthase activity"/>
    <property type="evidence" value="ECO:0007669"/>
    <property type="project" value="UniProtKB-UniRule"/>
</dbReference>
<dbReference type="GO" id="GO:0046872">
    <property type="term" value="F:metal ion binding"/>
    <property type="evidence" value="ECO:0007669"/>
    <property type="project" value="UniProtKB-KW"/>
</dbReference>
<dbReference type="GO" id="GO:0000166">
    <property type="term" value="F:nucleotide binding"/>
    <property type="evidence" value="ECO:0007669"/>
    <property type="project" value="UniProtKB-KW"/>
</dbReference>
<dbReference type="GO" id="GO:0008652">
    <property type="term" value="P:amino acid biosynthetic process"/>
    <property type="evidence" value="ECO:0007669"/>
    <property type="project" value="UniProtKB-KW"/>
</dbReference>
<dbReference type="GO" id="GO:0009073">
    <property type="term" value="P:aromatic amino acid family biosynthetic process"/>
    <property type="evidence" value="ECO:0007669"/>
    <property type="project" value="UniProtKB-KW"/>
</dbReference>
<dbReference type="GO" id="GO:0009423">
    <property type="term" value="P:chorismate biosynthetic process"/>
    <property type="evidence" value="ECO:0007669"/>
    <property type="project" value="UniProtKB-UniRule"/>
</dbReference>
<dbReference type="CDD" id="cd08195">
    <property type="entry name" value="DHQS"/>
    <property type="match status" value="1"/>
</dbReference>
<dbReference type="FunFam" id="3.40.50.1970:FF:000001">
    <property type="entry name" value="3-dehydroquinate synthase"/>
    <property type="match status" value="1"/>
</dbReference>
<dbReference type="Gene3D" id="3.40.50.1970">
    <property type="match status" value="1"/>
</dbReference>
<dbReference type="Gene3D" id="1.20.1090.10">
    <property type="entry name" value="Dehydroquinate synthase-like - alpha domain"/>
    <property type="match status" value="1"/>
</dbReference>
<dbReference type="HAMAP" id="MF_00110">
    <property type="entry name" value="DHQ_synthase"/>
    <property type="match status" value="1"/>
</dbReference>
<dbReference type="InterPro" id="IPR050071">
    <property type="entry name" value="Dehydroquinate_synthase"/>
</dbReference>
<dbReference type="InterPro" id="IPR016037">
    <property type="entry name" value="DHQ_synth_AroB"/>
</dbReference>
<dbReference type="InterPro" id="IPR030963">
    <property type="entry name" value="DHQ_synth_fam"/>
</dbReference>
<dbReference type="InterPro" id="IPR030960">
    <property type="entry name" value="DHQS/DOIS_N"/>
</dbReference>
<dbReference type="InterPro" id="IPR056179">
    <property type="entry name" value="DHQS_C"/>
</dbReference>
<dbReference type="NCBIfam" id="TIGR01357">
    <property type="entry name" value="aroB"/>
    <property type="match status" value="1"/>
</dbReference>
<dbReference type="PANTHER" id="PTHR43622">
    <property type="entry name" value="3-DEHYDROQUINATE SYNTHASE"/>
    <property type="match status" value="1"/>
</dbReference>
<dbReference type="PANTHER" id="PTHR43622:SF7">
    <property type="entry name" value="3-DEHYDROQUINATE SYNTHASE, CHLOROPLASTIC"/>
    <property type="match status" value="1"/>
</dbReference>
<dbReference type="Pfam" id="PF01761">
    <property type="entry name" value="DHQ_synthase"/>
    <property type="match status" value="1"/>
</dbReference>
<dbReference type="Pfam" id="PF24621">
    <property type="entry name" value="DHQS_C"/>
    <property type="match status" value="1"/>
</dbReference>
<dbReference type="PIRSF" id="PIRSF001455">
    <property type="entry name" value="DHQ_synth"/>
    <property type="match status" value="1"/>
</dbReference>
<dbReference type="SUPFAM" id="SSF56796">
    <property type="entry name" value="Dehydroquinate synthase-like"/>
    <property type="match status" value="1"/>
</dbReference>
<gene>
    <name evidence="1" type="primary">aroB</name>
    <name type="ordered locus">lpl0964</name>
</gene>
<reference key="1">
    <citation type="journal article" date="2004" name="Nat. Genet.">
        <title>Evidence in the Legionella pneumophila genome for exploitation of host cell functions and high genome plasticity.</title>
        <authorList>
            <person name="Cazalet C."/>
            <person name="Rusniok C."/>
            <person name="Brueggemann H."/>
            <person name="Zidane N."/>
            <person name="Magnier A."/>
            <person name="Ma L."/>
            <person name="Tichit M."/>
            <person name="Jarraud S."/>
            <person name="Bouchier C."/>
            <person name="Vandenesch F."/>
            <person name="Kunst F."/>
            <person name="Etienne J."/>
            <person name="Glaser P."/>
            <person name="Buchrieser C."/>
        </authorList>
    </citation>
    <scope>NUCLEOTIDE SEQUENCE [LARGE SCALE GENOMIC DNA]</scope>
    <source>
        <strain>Lens</strain>
    </source>
</reference>
<feature type="chain" id="PRO_0000231094" description="3-dehydroquinate synthase">
    <location>
        <begin position="1"/>
        <end position="369"/>
    </location>
</feature>
<feature type="binding site" evidence="1">
    <location>
        <begin position="75"/>
        <end position="80"/>
    </location>
    <ligand>
        <name>NAD(+)</name>
        <dbReference type="ChEBI" id="CHEBI:57540"/>
    </ligand>
</feature>
<feature type="binding site" evidence="1">
    <location>
        <begin position="109"/>
        <end position="113"/>
    </location>
    <ligand>
        <name>NAD(+)</name>
        <dbReference type="ChEBI" id="CHEBI:57540"/>
    </ligand>
</feature>
<feature type="binding site" evidence="1">
    <location>
        <begin position="133"/>
        <end position="134"/>
    </location>
    <ligand>
        <name>NAD(+)</name>
        <dbReference type="ChEBI" id="CHEBI:57540"/>
    </ligand>
</feature>
<feature type="binding site" evidence="1">
    <location>
        <position position="146"/>
    </location>
    <ligand>
        <name>NAD(+)</name>
        <dbReference type="ChEBI" id="CHEBI:57540"/>
    </ligand>
</feature>
<feature type="binding site" evidence="1">
    <location>
        <position position="155"/>
    </location>
    <ligand>
        <name>NAD(+)</name>
        <dbReference type="ChEBI" id="CHEBI:57540"/>
    </ligand>
</feature>
<feature type="binding site" evidence="1">
    <location>
        <begin position="173"/>
        <end position="176"/>
    </location>
    <ligand>
        <name>NAD(+)</name>
        <dbReference type="ChEBI" id="CHEBI:57540"/>
    </ligand>
</feature>
<feature type="binding site" evidence="1">
    <location>
        <position position="188"/>
    </location>
    <ligand>
        <name>Zn(2+)</name>
        <dbReference type="ChEBI" id="CHEBI:29105"/>
    </ligand>
</feature>
<feature type="binding site" evidence="1">
    <location>
        <position position="251"/>
    </location>
    <ligand>
        <name>Zn(2+)</name>
        <dbReference type="ChEBI" id="CHEBI:29105"/>
    </ligand>
</feature>
<feature type="binding site" evidence="1">
    <location>
        <position position="268"/>
    </location>
    <ligand>
        <name>Zn(2+)</name>
        <dbReference type="ChEBI" id="CHEBI:29105"/>
    </ligand>
</feature>
<keyword id="KW-0028">Amino-acid biosynthesis</keyword>
<keyword id="KW-0057">Aromatic amino acid biosynthesis</keyword>
<keyword id="KW-0170">Cobalt</keyword>
<keyword id="KW-0963">Cytoplasm</keyword>
<keyword id="KW-0456">Lyase</keyword>
<keyword id="KW-0479">Metal-binding</keyword>
<keyword id="KW-0520">NAD</keyword>
<keyword id="KW-0547">Nucleotide-binding</keyword>
<keyword id="KW-0862">Zinc</keyword>
<organism>
    <name type="scientific">Legionella pneumophila (strain Lens)</name>
    <dbReference type="NCBI Taxonomy" id="297245"/>
    <lineage>
        <taxon>Bacteria</taxon>
        <taxon>Pseudomonadati</taxon>
        <taxon>Pseudomonadota</taxon>
        <taxon>Gammaproteobacteria</taxon>
        <taxon>Legionellales</taxon>
        <taxon>Legionellaceae</taxon>
        <taxon>Legionella</taxon>
    </lineage>
</organism>